<sequence length="473" mass="51731">MKTLYSLRRFYPVETLFNGTLALAGRDQETTGFAWWAGNARLINLSGKLLGAHVAHAGLIVFWAGAMNLFEVAHFVPEKPMYEQGLILLPHLATLGWGVGPGGEVIDTFPYFVSGVLHLISSAVLGFGGIYHALLGPETLEESFPFFGYVWKDRNKMTTILGIHLILLGIGAFLLVLKALYFGGVYDTWAPGGGDVRKITNLTLSPSVIFGYLLKSPFGGEGWIVSVDDLEDIIGGHVWLGSICILGGIWHILTKPFAWARRAFVWSGEAYLSYSLGALSVFGFIACCFVWFNNTAYPSEFYGPTGPEASQAQAFTFLVRDQRLGANVGSAQGPTGLGKYLMRSPTGEVIFGGETMRFWDLRAPWLEPLRGPNGLDLGRLKKDIQPWQERRSAEYMTHAPLGSLNSVGGVATEINAVNYVSPRSWLATSHFVLGFFLFVGHLWHAGRARAAAAGFEKGIDRDLEPVLSMTPLS</sequence>
<geneLocation type="chloroplast"/>
<keyword id="KW-0007">Acetylation</keyword>
<keyword id="KW-0148">Chlorophyll</keyword>
<keyword id="KW-0150">Chloroplast</keyword>
<keyword id="KW-0157">Chromophore</keyword>
<keyword id="KW-0464">Manganese</keyword>
<keyword id="KW-0472">Membrane</keyword>
<keyword id="KW-0479">Metal-binding</keyword>
<keyword id="KW-0597">Phosphoprotein</keyword>
<keyword id="KW-0602">Photosynthesis</keyword>
<keyword id="KW-0604">Photosystem II</keyword>
<keyword id="KW-0934">Plastid</keyword>
<keyword id="KW-0793">Thylakoid</keyword>
<keyword id="KW-0812">Transmembrane</keyword>
<keyword id="KW-1133">Transmembrane helix</keyword>
<reference key="1">
    <citation type="journal article" date="2007" name="Mol. Phylogenet. Evol.">
        <title>Phylogenetic and evolutionary implications of complete chloroplast genome sequences of four early-diverging angiosperms: Buxus (Buxaceae), Chloranthus (Chloranthaceae), Dioscorea (Dioscoreaceae), and Illicium (Schisandraceae).</title>
        <authorList>
            <person name="Hansen D.R."/>
            <person name="Dastidar S.G."/>
            <person name="Cai Z."/>
            <person name="Penaflor C."/>
            <person name="Kuehl J.V."/>
            <person name="Boore J.L."/>
            <person name="Jansen R.K."/>
        </authorList>
    </citation>
    <scope>NUCLEOTIDE SEQUENCE [LARGE SCALE GENOMIC DNA]</scope>
</reference>
<accession>A6MMK3</accession>
<organism>
    <name type="scientific">Dioscorea elephantipes</name>
    <name type="common">Elephant's foot yam</name>
    <name type="synonym">Testudinaria elephantipes</name>
    <dbReference type="NCBI Taxonomy" id="145284"/>
    <lineage>
        <taxon>Eukaryota</taxon>
        <taxon>Viridiplantae</taxon>
        <taxon>Streptophyta</taxon>
        <taxon>Embryophyta</taxon>
        <taxon>Tracheophyta</taxon>
        <taxon>Spermatophyta</taxon>
        <taxon>Magnoliopsida</taxon>
        <taxon>Liliopsida</taxon>
        <taxon>Dioscoreales</taxon>
        <taxon>Dioscoreaceae</taxon>
        <taxon>Dioscorea</taxon>
    </lineage>
</organism>
<dbReference type="EMBL" id="EF380353">
    <property type="protein sequence ID" value="ABR01426.1"/>
    <property type="molecule type" value="Genomic_DNA"/>
</dbReference>
<dbReference type="RefSeq" id="YP_001294348.1">
    <property type="nucleotide sequence ID" value="NC_009601.1"/>
</dbReference>
<dbReference type="SMR" id="A6MMK3"/>
<dbReference type="GeneID" id="5236609"/>
<dbReference type="GO" id="GO:0009535">
    <property type="term" value="C:chloroplast thylakoid membrane"/>
    <property type="evidence" value="ECO:0007669"/>
    <property type="project" value="UniProtKB-SubCell"/>
</dbReference>
<dbReference type="GO" id="GO:0009523">
    <property type="term" value="C:photosystem II"/>
    <property type="evidence" value="ECO:0007669"/>
    <property type="project" value="UniProtKB-KW"/>
</dbReference>
<dbReference type="GO" id="GO:0016168">
    <property type="term" value="F:chlorophyll binding"/>
    <property type="evidence" value="ECO:0007669"/>
    <property type="project" value="UniProtKB-UniRule"/>
</dbReference>
<dbReference type="GO" id="GO:0045156">
    <property type="term" value="F:electron transporter, transferring electrons within the cyclic electron transport pathway of photosynthesis activity"/>
    <property type="evidence" value="ECO:0007669"/>
    <property type="project" value="InterPro"/>
</dbReference>
<dbReference type="GO" id="GO:0046872">
    <property type="term" value="F:metal ion binding"/>
    <property type="evidence" value="ECO:0007669"/>
    <property type="project" value="UniProtKB-KW"/>
</dbReference>
<dbReference type="GO" id="GO:0009772">
    <property type="term" value="P:photosynthetic electron transport in photosystem II"/>
    <property type="evidence" value="ECO:0007669"/>
    <property type="project" value="InterPro"/>
</dbReference>
<dbReference type="FunFam" id="1.10.10.670:FF:000001">
    <property type="entry name" value="Photosystem II CP43 reaction center protein"/>
    <property type="match status" value="1"/>
</dbReference>
<dbReference type="Gene3D" id="1.10.10.670">
    <property type="entry name" value="photosystem ii from thermosynechococcus elongatus"/>
    <property type="match status" value="1"/>
</dbReference>
<dbReference type="HAMAP" id="MF_01496">
    <property type="entry name" value="PSII_PsbC_CP43"/>
    <property type="match status" value="1"/>
</dbReference>
<dbReference type="InterPro" id="IPR000932">
    <property type="entry name" value="PS_antenna-like"/>
</dbReference>
<dbReference type="InterPro" id="IPR036001">
    <property type="entry name" value="PS_II_antenna-like_sf"/>
</dbReference>
<dbReference type="InterPro" id="IPR005869">
    <property type="entry name" value="PSII_PsbC"/>
</dbReference>
<dbReference type="InterPro" id="IPR044900">
    <property type="entry name" value="PSII_PsbC_sf"/>
</dbReference>
<dbReference type="NCBIfam" id="TIGR01153">
    <property type="entry name" value="psbC"/>
    <property type="match status" value="1"/>
</dbReference>
<dbReference type="Pfam" id="PF00421">
    <property type="entry name" value="PSII"/>
    <property type="match status" value="1"/>
</dbReference>
<dbReference type="SUPFAM" id="SSF161077">
    <property type="entry name" value="Photosystem II antenna protein-like"/>
    <property type="match status" value="1"/>
</dbReference>
<protein>
    <recommendedName>
        <fullName evidence="1">Photosystem II CP43 reaction center protein</fullName>
    </recommendedName>
    <alternativeName>
        <fullName evidence="1">PSII 43 kDa protein</fullName>
    </alternativeName>
    <alternativeName>
        <fullName evidence="1">Protein CP-43</fullName>
    </alternativeName>
</protein>
<evidence type="ECO:0000255" key="1">
    <source>
        <dbReference type="HAMAP-Rule" id="MF_01496"/>
    </source>
</evidence>
<gene>
    <name evidence="1" type="primary">psbC</name>
</gene>
<comment type="function">
    <text evidence="1">One of the components of the core complex of photosystem II (PSII). It binds chlorophyll and helps catalyze the primary light-induced photochemical processes of PSII. PSII is a light-driven water:plastoquinone oxidoreductase, using light energy to abstract electrons from H(2)O, generating O(2) and a proton gradient subsequently used for ATP formation.</text>
</comment>
<comment type="cofactor">
    <text evidence="1">Binds multiple chlorophylls and provides some of the ligands for the Ca-4Mn-5O cluster of the oxygen-evolving complex. It may also provide a ligand for a Cl- that is required for oxygen evolution. PSII binds additional chlorophylls, carotenoids and specific lipids.</text>
</comment>
<comment type="subunit">
    <text evidence="1">PSII is composed of 1 copy each of membrane proteins PsbA, PsbB, PsbC, PsbD, PsbE, PsbF, PsbH, PsbI, PsbJ, PsbK, PsbL, PsbM, PsbT, PsbX, PsbY, PsbZ, Psb30/Ycf12, at least 3 peripheral proteins of the oxygen-evolving complex and a large number of cofactors. It forms dimeric complexes.</text>
</comment>
<comment type="subcellular location">
    <subcellularLocation>
        <location evidence="1">Plastid</location>
        <location evidence="1">Chloroplast thylakoid membrane</location>
        <topology evidence="1">Multi-pass membrane protein</topology>
    </subcellularLocation>
</comment>
<comment type="similarity">
    <text evidence="1">Belongs to the PsbB/PsbC family. PsbC subfamily.</text>
</comment>
<name>PSBC_DIOEL</name>
<feature type="propeptide" id="PRO_0000431140" evidence="1">
    <location>
        <begin position="1"/>
        <end position="14"/>
    </location>
</feature>
<feature type="chain" id="PRO_0000361374" description="Photosystem II CP43 reaction center protein" evidence="1">
    <location>
        <begin position="15"/>
        <end position="473"/>
    </location>
</feature>
<feature type="transmembrane region" description="Helical" evidence="1">
    <location>
        <begin position="69"/>
        <end position="93"/>
    </location>
</feature>
<feature type="transmembrane region" description="Helical" evidence="1">
    <location>
        <begin position="134"/>
        <end position="155"/>
    </location>
</feature>
<feature type="transmembrane region" description="Helical" evidence="1">
    <location>
        <begin position="178"/>
        <end position="200"/>
    </location>
</feature>
<feature type="transmembrane region" description="Helical" evidence="1">
    <location>
        <begin position="255"/>
        <end position="275"/>
    </location>
</feature>
<feature type="transmembrane region" description="Helical" evidence="1">
    <location>
        <begin position="291"/>
        <end position="312"/>
    </location>
</feature>
<feature type="transmembrane region" description="Helical" evidence="1">
    <location>
        <begin position="447"/>
        <end position="471"/>
    </location>
</feature>
<feature type="binding site" evidence="1">
    <location>
        <position position="367"/>
    </location>
    <ligand>
        <name>[CaMn4O5] cluster</name>
        <dbReference type="ChEBI" id="CHEBI:189552"/>
    </ligand>
</feature>
<feature type="modified residue" description="N-acetylthreonine" evidence="1">
    <location>
        <position position="15"/>
    </location>
</feature>
<feature type="modified residue" description="Phosphothreonine" evidence="1">
    <location>
        <position position="15"/>
    </location>
</feature>
<proteinExistence type="inferred from homology"/>